<protein>
    <recommendedName>
        <fullName>F-box/kelch-repeat protein At1g30090</fullName>
    </recommendedName>
</protein>
<sequence>MQRVRVSSQRAVVHKLGDSQMTLSPKFRVAASIQSTLFDRSSELELSLRGEPLIPGLPDDVALNCLLRVPVQSHVSSKSVCKRWHLLFGTKETFFAKRKEFGFKDPWLFVVGFSRCTGKIQWKVLDLRNLTWHEIPAMPCRDKVCPHGFRSVSMPREGTMFVCGGMVSDSDCPLDLVLKYDMVKNHWTVTNKMITARSFFASGVIDGMIYAAGGNAADLYELDCAEVLNPLDGNWRPVSNMVAHMASYDTAVLNGKLLVTEGWLWPFFVSPRGQVYDPRTDQWETMSMGLREGWTGTSVVIYDRLFIVSELERMKMKVYDPVTDSWETINGPELPEQICRPFAVNCYGNRVYVVGRNLHLAVGNIWQSENKFAVRWEVVESPERYADITPSNSQILFA</sequence>
<feature type="chain" id="PRO_0000283178" description="F-box/kelch-repeat protein At1g30090">
    <location>
        <begin position="1"/>
        <end position="398"/>
    </location>
</feature>
<feature type="domain" description="F-box">
    <location>
        <begin position="51"/>
        <end position="98"/>
    </location>
</feature>
<feature type="repeat" description="Kelch 1">
    <location>
        <begin position="106"/>
        <end position="152"/>
    </location>
</feature>
<feature type="repeat" description="Kelch 2">
    <location>
        <begin position="159"/>
        <end position="207"/>
    </location>
</feature>
<feature type="repeat" description="Kelch 3">
    <location>
        <begin position="209"/>
        <end position="255"/>
    </location>
</feature>
<feature type="repeat" description="Kelch 4">
    <location>
        <begin position="257"/>
        <end position="304"/>
    </location>
</feature>
<feature type="repeat" description="Kelch 5">
    <location>
        <begin position="305"/>
        <end position="346"/>
    </location>
</feature>
<gene>
    <name type="ordered locus">At1g30090</name>
    <name type="ORF">T1P2.14</name>
    <name type="ORF">T2H7.11</name>
</gene>
<proteinExistence type="evidence at transcript level"/>
<name>FBK17_ARATH</name>
<keyword id="KW-0880">Kelch repeat</keyword>
<keyword id="KW-1185">Reference proteome</keyword>
<keyword id="KW-0677">Repeat</keyword>
<reference key="1">
    <citation type="journal article" date="2000" name="Nature">
        <title>Sequence and analysis of chromosome 1 of the plant Arabidopsis thaliana.</title>
        <authorList>
            <person name="Theologis A."/>
            <person name="Ecker J.R."/>
            <person name="Palm C.J."/>
            <person name="Federspiel N.A."/>
            <person name="Kaul S."/>
            <person name="White O."/>
            <person name="Alonso J."/>
            <person name="Altafi H."/>
            <person name="Araujo R."/>
            <person name="Bowman C.L."/>
            <person name="Brooks S.Y."/>
            <person name="Buehler E."/>
            <person name="Chan A."/>
            <person name="Chao Q."/>
            <person name="Chen H."/>
            <person name="Cheuk R.F."/>
            <person name="Chin C.W."/>
            <person name="Chung M.K."/>
            <person name="Conn L."/>
            <person name="Conway A.B."/>
            <person name="Conway A.R."/>
            <person name="Creasy T.H."/>
            <person name="Dewar K."/>
            <person name="Dunn P."/>
            <person name="Etgu P."/>
            <person name="Feldblyum T.V."/>
            <person name="Feng J.-D."/>
            <person name="Fong B."/>
            <person name="Fujii C.Y."/>
            <person name="Gill J.E."/>
            <person name="Goldsmith A.D."/>
            <person name="Haas B."/>
            <person name="Hansen N.F."/>
            <person name="Hughes B."/>
            <person name="Huizar L."/>
            <person name="Hunter J.L."/>
            <person name="Jenkins J."/>
            <person name="Johnson-Hopson C."/>
            <person name="Khan S."/>
            <person name="Khaykin E."/>
            <person name="Kim C.J."/>
            <person name="Koo H.L."/>
            <person name="Kremenetskaia I."/>
            <person name="Kurtz D.B."/>
            <person name="Kwan A."/>
            <person name="Lam B."/>
            <person name="Langin-Hooper S."/>
            <person name="Lee A."/>
            <person name="Lee J.M."/>
            <person name="Lenz C.A."/>
            <person name="Li J.H."/>
            <person name="Li Y.-P."/>
            <person name="Lin X."/>
            <person name="Liu S.X."/>
            <person name="Liu Z.A."/>
            <person name="Luros J.S."/>
            <person name="Maiti R."/>
            <person name="Marziali A."/>
            <person name="Militscher J."/>
            <person name="Miranda M."/>
            <person name="Nguyen M."/>
            <person name="Nierman W.C."/>
            <person name="Osborne B.I."/>
            <person name="Pai G."/>
            <person name="Peterson J."/>
            <person name="Pham P.K."/>
            <person name="Rizzo M."/>
            <person name="Rooney T."/>
            <person name="Rowley D."/>
            <person name="Sakano H."/>
            <person name="Salzberg S.L."/>
            <person name="Schwartz J.R."/>
            <person name="Shinn P."/>
            <person name="Southwick A.M."/>
            <person name="Sun H."/>
            <person name="Tallon L.J."/>
            <person name="Tambunga G."/>
            <person name="Toriumi M.J."/>
            <person name="Town C.D."/>
            <person name="Utterback T."/>
            <person name="Van Aken S."/>
            <person name="Vaysberg M."/>
            <person name="Vysotskaia V.S."/>
            <person name="Walker M."/>
            <person name="Wu D."/>
            <person name="Yu G."/>
            <person name="Fraser C.M."/>
            <person name="Venter J.C."/>
            <person name="Davis R.W."/>
        </authorList>
    </citation>
    <scope>NUCLEOTIDE SEQUENCE [LARGE SCALE GENOMIC DNA]</scope>
    <source>
        <strain>cv. Columbia</strain>
    </source>
</reference>
<reference key="2">
    <citation type="journal article" date="2017" name="Plant J.">
        <title>Araport11: a complete reannotation of the Arabidopsis thaliana reference genome.</title>
        <authorList>
            <person name="Cheng C.Y."/>
            <person name="Krishnakumar V."/>
            <person name="Chan A.P."/>
            <person name="Thibaud-Nissen F."/>
            <person name="Schobel S."/>
            <person name="Town C.D."/>
        </authorList>
    </citation>
    <scope>GENOME REANNOTATION</scope>
    <source>
        <strain>cv. Columbia</strain>
    </source>
</reference>
<reference key="3">
    <citation type="journal article" date="2003" name="Science">
        <title>Empirical analysis of transcriptional activity in the Arabidopsis genome.</title>
        <authorList>
            <person name="Yamada K."/>
            <person name="Lim J."/>
            <person name="Dale J.M."/>
            <person name="Chen H."/>
            <person name="Shinn P."/>
            <person name="Palm C.J."/>
            <person name="Southwick A.M."/>
            <person name="Wu H.C."/>
            <person name="Kim C.J."/>
            <person name="Nguyen M."/>
            <person name="Pham P.K."/>
            <person name="Cheuk R.F."/>
            <person name="Karlin-Newmann G."/>
            <person name="Liu S.X."/>
            <person name="Lam B."/>
            <person name="Sakano H."/>
            <person name="Wu T."/>
            <person name="Yu G."/>
            <person name="Miranda M."/>
            <person name="Quach H.L."/>
            <person name="Tripp M."/>
            <person name="Chang C.H."/>
            <person name="Lee J.M."/>
            <person name="Toriumi M.J."/>
            <person name="Chan M.M."/>
            <person name="Tang C.C."/>
            <person name="Onodera C.S."/>
            <person name="Deng J.M."/>
            <person name="Akiyama K."/>
            <person name="Ansari Y."/>
            <person name="Arakawa T."/>
            <person name="Banh J."/>
            <person name="Banno F."/>
            <person name="Bowser L."/>
            <person name="Brooks S.Y."/>
            <person name="Carninci P."/>
            <person name="Chao Q."/>
            <person name="Choy N."/>
            <person name="Enju A."/>
            <person name="Goldsmith A.D."/>
            <person name="Gurjal M."/>
            <person name="Hansen N.F."/>
            <person name="Hayashizaki Y."/>
            <person name="Johnson-Hopson C."/>
            <person name="Hsuan V.W."/>
            <person name="Iida K."/>
            <person name="Karnes M."/>
            <person name="Khan S."/>
            <person name="Koesema E."/>
            <person name="Ishida J."/>
            <person name="Jiang P.X."/>
            <person name="Jones T."/>
            <person name="Kawai J."/>
            <person name="Kamiya A."/>
            <person name="Meyers C."/>
            <person name="Nakajima M."/>
            <person name="Narusaka M."/>
            <person name="Seki M."/>
            <person name="Sakurai T."/>
            <person name="Satou M."/>
            <person name="Tamse R."/>
            <person name="Vaysberg M."/>
            <person name="Wallender E.K."/>
            <person name="Wong C."/>
            <person name="Yamamura Y."/>
            <person name="Yuan S."/>
            <person name="Shinozaki K."/>
            <person name="Davis R.W."/>
            <person name="Theologis A."/>
            <person name="Ecker J.R."/>
        </authorList>
    </citation>
    <scope>NUCLEOTIDE SEQUENCE [LARGE SCALE MRNA]</scope>
    <source>
        <strain>cv. Columbia</strain>
    </source>
</reference>
<accession>Q9C6Z0</accession>
<accession>Q9C8R2</accession>
<comment type="sequence caution" evidence="1">
    <conflict type="erroneous initiation">
        <sequence resource="EMBL-CDS" id="AAG52060"/>
    </conflict>
</comment>
<dbReference type="EMBL" id="AC022455">
    <property type="protein sequence ID" value="AAG52060.1"/>
    <property type="status" value="ALT_INIT"/>
    <property type="molecule type" value="Genomic_DNA"/>
</dbReference>
<dbReference type="EMBL" id="AC074176">
    <property type="protein sequence ID" value="AAG50856.1"/>
    <property type="molecule type" value="Genomic_DNA"/>
</dbReference>
<dbReference type="EMBL" id="CP002684">
    <property type="protein sequence ID" value="AEE31177.1"/>
    <property type="molecule type" value="Genomic_DNA"/>
</dbReference>
<dbReference type="EMBL" id="AY057619">
    <property type="protein sequence ID" value="AAL14414.1"/>
    <property type="molecule type" value="mRNA"/>
</dbReference>
<dbReference type="EMBL" id="BT002616">
    <property type="protein sequence ID" value="AAO11532.1"/>
    <property type="molecule type" value="mRNA"/>
</dbReference>
<dbReference type="PIR" id="H86424">
    <property type="entry name" value="H86424"/>
</dbReference>
<dbReference type="RefSeq" id="NP_564347.1">
    <property type="nucleotide sequence ID" value="NM_102748.2"/>
</dbReference>
<dbReference type="SMR" id="Q9C6Z0"/>
<dbReference type="FunCoup" id="Q9C6Z0">
    <property type="interactions" value="375"/>
</dbReference>
<dbReference type="PaxDb" id="3702-AT1G30090.1"/>
<dbReference type="ProteomicsDB" id="222553"/>
<dbReference type="EnsemblPlants" id="AT1G30090.1">
    <property type="protein sequence ID" value="AT1G30090.1"/>
    <property type="gene ID" value="AT1G30090"/>
</dbReference>
<dbReference type="GeneID" id="839888"/>
<dbReference type="Gramene" id="AT1G30090.1">
    <property type="protein sequence ID" value="AT1G30090.1"/>
    <property type="gene ID" value="AT1G30090"/>
</dbReference>
<dbReference type="KEGG" id="ath:AT1G30090"/>
<dbReference type="Araport" id="AT1G30090"/>
<dbReference type="TAIR" id="AT1G30090"/>
<dbReference type="eggNOG" id="KOG1072">
    <property type="taxonomic scope" value="Eukaryota"/>
</dbReference>
<dbReference type="HOGENOM" id="CLU_044411_0_0_1"/>
<dbReference type="InParanoid" id="Q9C6Z0"/>
<dbReference type="OMA" id="HPIANMG"/>
<dbReference type="PhylomeDB" id="Q9C6Z0"/>
<dbReference type="PRO" id="PR:Q9C6Z0"/>
<dbReference type="Proteomes" id="UP000006548">
    <property type="component" value="Chromosome 1"/>
</dbReference>
<dbReference type="ExpressionAtlas" id="Q9C6Z0">
    <property type="expression patterns" value="baseline and differential"/>
</dbReference>
<dbReference type="GO" id="GO:0009507">
    <property type="term" value="C:chloroplast"/>
    <property type="evidence" value="ECO:0000314"/>
    <property type="project" value="TAIR"/>
</dbReference>
<dbReference type="CDD" id="cd22152">
    <property type="entry name" value="F-box_AtAFR-like"/>
    <property type="match status" value="1"/>
</dbReference>
<dbReference type="Gene3D" id="2.120.10.80">
    <property type="entry name" value="Kelch-type beta propeller"/>
    <property type="match status" value="1"/>
</dbReference>
<dbReference type="InterPro" id="IPR036047">
    <property type="entry name" value="F-box-like_dom_sf"/>
</dbReference>
<dbReference type="InterPro" id="IPR001810">
    <property type="entry name" value="F-box_dom"/>
</dbReference>
<dbReference type="InterPro" id="IPR015915">
    <property type="entry name" value="Kelch-typ_b-propeller"/>
</dbReference>
<dbReference type="InterPro" id="IPR006652">
    <property type="entry name" value="Kelch_1"/>
</dbReference>
<dbReference type="PANTHER" id="PTHR46344">
    <property type="entry name" value="OS02G0202900 PROTEIN"/>
    <property type="match status" value="1"/>
</dbReference>
<dbReference type="PANTHER" id="PTHR46344:SF4">
    <property type="entry name" value="OS07G0153400 PROTEIN"/>
    <property type="match status" value="1"/>
</dbReference>
<dbReference type="Pfam" id="PF00646">
    <property type="entry name" value="F-box"/>
    <property type="match status" value="1"/>
</dbReference>
<dbReference type="Pfam" id="PF01344">
    <property type="entry name" value="Kelch_1"/>
    <property type="match status" value="2"/>
</dbReference>
<dbReference type="SMART" id="SM00256">
    <property type="entry name" value="FBOX"/>
    <property type="match status" value="1"/>
</dbReference>
<dbReference type="SMART" id="SM00612">
    <property type="entry name" value="Kelch"/>
    <property type="match status" value="2"/>
</dbReference>
<dbReference type="SUPFAM" id="SSF81383">
    <property type="entry name" value="F-box domain"/>
    <property type="match status" value="1"/>
</dbReference>
<dbReference type="SUPFAM" id="SSF117281">
    <property type="entry name" value="Kelch motif"/>
    <property type="match status" value="1"/>
</dbReference>
<evidence type="ECO:0000305" key="1"/>
<organism>
    <name type="scientific">Arabidopsis thaliana</name>
    <name type="common">Mouse-ear cress</name>
    <dbReference type="NCBI Taxonomy" id="3702"/>
    <lineage>
        <taxon>Eukaryota</taxon>
        <taxon>Viridiplantae</taxon>
        <taxon>Streptophyta</taxon>
        <taxon>Embryophyta</taxon>
        <taxon>Tracheophyta</taxon>
        <taxon>Spermatophyta</taxon>
        <taxon>Magnoliopsida</taxon>
        <taxon>eudicotyledons</taxon>
        <taxon>Gunneridae</taxon>
        <taxon>Pentapetalae</taxon>
        <taxon>rosids</taxon>
        <taxon>malvids</taxon>
        <taxon>Brassicales</taxon>
        <taxon>Brassicaceae</taxon>
        <taxon>Camelineae</taxon>
        <taxon>Arabidopsis</taxon>
    </lineage>
</organism>